<comment type="subcellular location">
    <subcellularLocation>
        <location>Secreted</location>
    </subcellularLocation>
</comment>
<comment type="tissue specificity">
    <text>Expressed by the venom duct.</text>
</comment>
<comment type="domain">
    <text evidence="1">The presence of a 'disulfide through disulfide knot' structurally defines this protein as a knottin.</text>
</comment>
<comment type="domain">
    <text>The cysteine framework is VI/VII (C-C-CC-C-C).</text>
</comment>
<comment type="PTM">
    <text evidence="3">Brominated at one of the Trp residues.</text>
</comment>
<comment type="mass spectrometry">
    <text>TxVI/A.</text>
</comment>
<comment type="similarity">
    <text evidence="4">Belongs to the conotoxin O2 superfamily.</text>
</comment>
<accession>Q9BPB1</accession>
<reference key="1">
    <citation type="journal article" date="2001" name="Mol. Biol. Evol.">
        <title>Mechanisms for evolving hypervariability: the case of conopeptides.</title>
        <authorList>
            <person name="Conticello S.G."/>
            <person name="Gilad Y."/>
            <person name="Avidan N."/>
            <person name="Ben-Asher E."/>
            <person name="Levy Z."/>
            <person name="Fainzilber M."/>
        </authorList>
    </citation>
    <scope>NUCLEOTIDE SEQUENCE [MRNA]</scope>
    <source>
        <tissue>Venom duct</tissue>
    </source>
</reference>
<reference key="2">
    <citation type="journal article" date="2006" name="FEBS J.">
        <title>Novel gamma-carboxyglutamic acid-containing peptides from the venom of Conus textile.</title>
        <authorList>
            <person name="Czerwiec E."/>
            <person name="Kalume D.E."/>
            <person name="Roepstorff P."/>
            <person name="Hambe B."/>
            <person name="Furie B."/>
            <person name="Furie B.C."/>
            <person name="Stenflo J."/>
        </authorList>
    </citation>
    <scope>PROTEIN SEQUENCE OF 47-71</scope>
    <scope>MASS SPECTROMETRY</scope>
    <scope>HYDROXYLATION AT PRO-58</scope>
    <scope>GAMMA-CARBOXYGLUTAMATION AT GLU-56</scope>
    <scope>BROMINATION</scope>
    <scope>AMIDATION AT SER-71</scope>
    <source>
        <tissue>Venom</tissue>
    </source>
</reference>
<sequence>MQKLIILLLVAAVLMSTQALFQEKRPMKKIDFLSKGKTDAEKQQKRSCSDDWQYCESPTDCCSWDCDVVCSG</sequence>
<evidence type="ECO:0000250" key="1"/>
<evidence type="ECO:0000255" key="2"/>
<evidence type="ECO:0000269" key="3">
    <source>
    </source>
</evidence>
<evidence type="ECO:0000305" key="4"/>
<dbReference type="EMBL" id="AF215024">
    <property type="protein sequence ID" value="AAG60452.1"/>
    <property type="molecule type" value="mRNA"/>
</dbReference>
<dbReference type="ConoServer" id="711">
    <property type="toxin name" value="Gla(2)-TxVI/A precursor"/>
</dbReference>
<dbReference type="GO" id="GO:0005576">
    <property type="term" value="C:extracellular region"/>
    <property type="evidence" value="ECO:0007669"/>
    <property type="project" value="UniProtKB-SubCell"/>
</dbReference>
<dbReference type="GO" id="GO:0008200">
    <property type="term" value="F:ion channel inhibitor activity"/>
    <property type="evidence" value="ECO:0007669"/>
    <property type="project" value="InterPro"/>
</dbReference>
<dbReference type="GO" id="GO:0090729">
    <property type="term" value="F:toxin activity"/>
    <property type="evidence" value="ECO:0007669"/>
    <property type="project" value="UniProtKB-KW"/>
</dbReference>
<dbReference type="InterPro" id="IPR004214">
    <property type="entry name" value="Conotoxin"/>
</dbReference>
<dbReference type="Pfam" id="PF02950">
    <property type="entry name" value="Conotoxin"/>
    <property type="match status" value="1"/>
</dbReference>
<keyword id="KW-0027">Amidation</keyword>
<keyword id="KW-0102">Bromination</keyword>
<keyword id="KW-0165">Cleavage on pair of basic residues</keyword>
<keyword id="KW-0903">Direct protein sequencing</keyword>
<keyword id="KW-1015">Disulfide bond</keyword>
<keyword id="KW-0301">Gamma-carboxyglutamic acid</keyword>
<keyword id="KW-0379">Hydroxylation</keyword>
<keyword id="KW-0960">Knottin</keyword>
<keyword id="KW-0528">Neurotoxin</keyword>
<keyword id="KW-0964">Secreted</keyword>
<keyword id="KW-0732">Signal</keyword>
<keyword id="KW-0800">Toxin</keyword>
<proteinExistence type="evidence at protein level"/>
<organism>
    <name type="scientific">Conus textile</name>
    <name type="common">Cloth-of-gold cone</name>
    <dbReference type="NCBI Taxonomy" id="6494"/>
    <lineage>
        <taxon>Eukaryota</taxon>
        <taxon>Metazoa</taxon>
        <taxon>Spiralia</taxon>
        <taxon>Lophotrochozoa</taxon>
        <taxon>Mollusca</taxon>
        <taxon>Gastropoda</taxon>
        <taxon>Caenogastropoda</taxon>
        <taxon>Neogastropoda</taxon>
        <taxon>Conoidea</taxon>
        <taxon>Conidae</taxon>
        <taxon>Conus</taxon>
        <taxon>Cylinder</taxon>
    </lineage>
</organism>
<protein>
    <recommendedName>
        <fullName>Conotoxin Gla(2)-TxVI/A</fullName>
    </recommendedName>
    <alternativeName>
        <fullName>Conotoxin TxMEKL-043</fullName>
    </alternativeName>
</protein>
<feature type="signal peptide" evidence="2">
    <location>
        <begin position="1"/>
        <end position="19"/>
    </location>
</feature>
<feature type="propeptide" id="PRO_0000404788">
    <location>
        <begin position="20"/>
        <end position="44"/>
    </location>
</feature>
<feature type="peptide" id="PRO_0000404789" description="Conotoxin Gla(2)-TxVI/A">
    <location>
        <begin position="47"/>
        <end position="71"/>
    </location>
</feature>
<feature type="modified residue" description="4-carboxyglutamate" evidence="3">
    <location>
        <position position="56"/>
    </location>
</feature>
<feature type="modified residue" description="4-hydroxyproline" evidence="3">
    <location>
        <position position="58"/>
    </location>
</feature>
<feature type="modified residue" description="Serine amide" evidence="3">
    <location>
        <position position="71"/>
    </location>
</feature>
<feature type="disulfide bond" evidence="1">
    <location>
        <begin position="48"/>
        <end position="62"/>
    </location>
</feature>
<feature type="disulfide bond" evidence="1">
    <location>
        <begin position="55"/>
        <end position="66"/>
    </location>
</feature>
<feature type="disulfide bond" evidence="1">
    <location>
        <begin position="61"/>
        <end position="70"/>
    </location>
</feature>
<name>O226A_CONTE</name>